<accession>B6J7W1</accession>
<dbReference type="EMBL" id="CP001020">
    <property type="protein sequence ID" value="ACJ20360.1"/>
    <property type="molecule type" value="Genomic_DNA"/>
</dbReference>
<dbReference type="RefSeq" id="WP_005770903.1">
    <property type="nucleotide sequence ID" value="NC_011528.1"/>
</dbReference>
<dbReference type="SMR" id="B6J7W1"/>
<dbReference type="KEGG" id="cbc:CbuK_1169"/>
<dbReference type="HOGENOM" id="CLU_108953_3_0_6"/>
<dbReference type="GO" id="GO:0005829">
    <property type="term" value="C:cytosol"/>
    <property type="evidence" value="ECO:0007669"/>
    <property type="project" value="TreeGrafter"/>
</dbReference>
<dbReference type="GO" id="GO:0003723">
    <property type="term" value="F:RNA binding"/>
    <property type="evidence" value="ECO:0007669"/>
    <property type="project" value="UniProtKB-UniRule"/>
</dbReference>
<dbReference type="GO" id="GO:0070929">
    <property type="term" value="P:trans-translation"/>
    <property type="evidence" value="ECO:0007669"/>
    <property type="project" value="UniProtKB-UniRule"/>
</dbReference>
<dbReference type="CDD" id="cd09294">
    <property type="entry name" value="SmpB"/>
    <property type="match status" value="1"/>
</dbReference>
<dbReference type="Gene3D" id="2.40.280.10">
    <property type="match status" value="1"/>
</dbReference>
<dbReference type="HAMAP" id="MF_00023">
    <property type="entry name" value="SmpB"/>
    <property type="match status" value="1"/>
</dbReference>
<dbReference type="InterPro" id="IPR023620">
    <property type="entry name" value="SmpB"/>
</dbReference>
<dbReference type="InterPro" id="IPR000037">
    <property type="entry name" value="SsrA-bd_prot"/>
</dbReference>
<dbReference type="InterPro" id="IPR020081">
    <property type="entry name" value="SsrA-bd_prot_CS"/>
</dbReference>
<dbReference type="NCBIfam" id="NF003843">
    <property type="entry name" value="PRK05422.1"/>
    <property type="match status" value="1"/>
</dbReference>
<dbReference type="NCBIfam" id="TIGR00086">
    <property type="entry name" value="smpB"/>
    <property type="match status" value="1"/>
</dbReference>
<dbReference type="PANTHER" id="PTHR30308:SF2">
    <property type="entry name" value="SSRA-BINDING PROTEIN"/>
    <property type="match status" value="1"/>
</dbReference>
<dbReference type="PANTHER" id="PTHR30308">
    <property type="entry name" value="TMRNA-BINDING COMPONENT OF TRANS-TRANSLATION TAGGING COMPLEX"/>
    <property type="match status" value="1"/>
</dbReference>
<dbReference type="Pfam" id="PF01668">
    <property type="entry name" value="SmpB"/>
    <property type="match status" value="1"/>
</dbReference>
<dbReference type="SUPFAM" id="SSF74982">
    <property type="entry name" value="Small protein B (SmpB)"/>
    <property type="match status" value="1"/>
</dbReference>
<dbReference type="PROSITE" id="PS01317">
    <property type="entry name" value="SSRP"/>
    <property type="match status" value="1"/>
</dbReference>
<keyword id="KW-0963">Cytoplasm</keyword>
<keyword id="KW-0694">RNA-binding</keyword>
<comment type="function">
    <text evidence="1">Required for rescue of stalled ribosomes mediated by trans-translation. Binds to transfer-messenger RNA (tmRNA), required for stable association of tmRNA with ribosomes. tmRNA and SmpB together mimic tRNA shape, replacing the anticodon stem-loop with SmpB. tmRNA is encoded by the ssrA gene; the 2 termini fold to resemble tRNA(Ala) and it encodes a 'tag peptide', a short internal open reading frame. During trans-translation Ala-aminoacylated tmRNA acts like a tRNA, entering the A-site of stalled ribosomes, displacing the stalled mRNA. The ribosome then switches to translate the ORF on the tmRNA; the nascent peptide is terminated with the 'tag peptide' encoded by the tmRNA and targeted for degradation. The ribosome is freed to recommence translation, which seems to be the essential function of trans-translation.</text>
</comment>
<comment type="subcellular location">
    <subcellularLocation>
        <location evidence="1">Cytoplasm</location>
    </subcellularLocation>
    <text evidence="1">The tmRNA-SmpB complex associates with stalled 70S ribosomes.</text>
</comment>
<comment type="similarity">
    <text evidence="1">Belongs to the SmpB family.</text>
</comment>
<proteinExistence type="inferred from homology"/>
<evidence type="ECO:0000255" key="1">
    <source>
        <dbReference type="HAMAP-Rule" id="MF_00023"/>
    </source>
</evidence>
<protein>
    <recommendedName>
        <fullName evidence="1">SsrA-binding protein</fullName>
    </recommendedName>
    <alternativeName>
        <fullName evidence="1">Small protein B</fullName>
    </alternativeName>
</protein>
<organism>
    <name type="scientific">Coxiella burnetii (strain CbuK_Q154)</name>
    <name type="common">Coxiella burnetii (strain Q154)</name>
    <dbReference type="NCBI Taxonomy" id="434924"/>
    <lineage>
        <taxon>Bacteria</taxon>
        <taxon>Pseudomonadati</taxon>
        <taxon>Pseudomonadota</taxon>
        <taxon>Gammaproteobacteria</taxon>
        <taxon>Legionellales</taxon>
        <taxon>Coxiellaceae</taxon>
        <taxon>Coxiella</taxon>
    </lineage>
</organism>
<gene>
    <name evidence="1" type="primary">smpB</name>
    <name type="ordered locus">CbuK_1169</name>
</gene>
<sequence length="159" mass="18389">MNKQISKKPAQRTIALNKKALHDYYVEQRFEAGLVLEGWEVKSIRAGRVQLRDSYVVFKSGEAWLIGAHLSPLPNVAEYMKADPQSSRKLLLNKREIGKLFGAVQKQGLTVVPLDLHWHKNHVKVEIALAKGKKTHDKRETIKRREWEREKHRVLKSHG</sequence>
<reference key="1">
    <citation type="journal article" date="2009" name="Infect. Immun.">
        <title>Comparative genomics reveal extensive transposon-mediated genomic plasticity and diversity among potential effector proteins within the genus Coxiella.</title>
        <authorList>
            <person name="Beare P.A."/>
            <person name="Unsworth N."/>
            <person name="Andoh M."/>
            <person name="Voth D.E."/>
            <person name="Omsland A."/>
            <person name="Gilk S.D."/>
            <person name="Williams K.P."/>
            <person name="Sobral B.W."/>
            <person name="Kupko J.J. III"/>
            <person name="Porcella S.F."/>
            <person name="Samuel J.E."/>
            <person name="Heinzen R.A."/>
        </authorList>
    </citation>
    <scope>NUCLEOTIDE SEQUENCE [LARGE SCALE GENOMIC DNA]</scope>
    <source>
        <strain>CbuK_Q154</strain>
    </source>
</reference>
<name>SSRP_COXB1</name>
<feature type="chain" id="PRO_1000090144" description="SsrA-binding protein">
    <location>
        <begin position="1"/>
        <end position="159"/>
    </location>
</feature>